<gene>
    <name type="ordered locus">At3g29830</name>
    <name type="ORF">K17E7.14</name>
</gene>
<gene>
    <name type="ordered locus">At1gXXXXX</name>
    <name type="ORF">F21N10.6</name>
</gene>
<evidence type="ECO:0000255" key="1">
    <source>
        <dbReference type="PROSITE-ProRule" id="PRU00080"/>
    </source>
</evidence>
<evidence type="ECO:0000305" key="2"/>
<accession>Q9LJ48</accession>
<accession>F4J5F0</accession>
<accession>Q9FWK0</accession>
<comment type="sequence caution" evidence="2">
    <conflict type="erroneous gene model prediction">
        <sequence resource="EMBL-CDS" id="AAG12672"/>
    </conflict>
</comment>
<comment type="sequence caution" evidence="2">
    <conflict type="erroneous gene model prediction">
        <sequence resource="EMBL-CDS" id="AEE77617"/>
    </conflict>
</comment>
<organism>
    <name type="scientific">Arabidopsis thaliana</name>
    <name type="common">Mouse-ear cress</name>
    <dbReference type="NCBI Taxonomy" id="3702"/>
    <lineage>
        <taxon>Eukaryota</taxon>
        <taxon>Viridiplantae</taxon>
        <taxon>Streptophyta</taxon>
        <taxon>Embryophyta</taxon>
        <taxon>Tracheophyta</taxon>
        <taxon>Spermatophyta</taxon>
        <taxon>Magnoliopsida</taxon>
        <taxon>eudicotyledons</taxon>
        <taxon>Gunneridae</taxon>
        <taxon>Pentapetalae</taxon>
        <taxon>rosids</taxon>
        <taxon>malvids</taxon>
        <taxon>Brassicales</taxon>
        <taxon>Brassicaceae</taxon>
        <taxon>Camelineae</taxon>
        <taxon>Arabidopsis</taxon>
    </lineage>
</organism>
<feature type="chain" id="PRO_0000283461" description="Putative F-box protein At3g29830">
    <location>
        <begin position="1"/>
        <end position="463"/>
    </location>
</feature>
<feature type="domain" description="F-box" evidence="1">
    <location>
        <begin position="7"/>
        <end position="55"/>
    </location>
</feature>
<proteinExistence type="predicted"/>
<reference key="1">
    <citation type="journal article" date="2000" name="DNA Res.">
        <title>Structural analysis of Arabidopsis thaliana chromosome 3. II. Sequence features of the 4,251,695 bp regions covered by 90 P1, TAC and BAC clones.</title>
        <authorList>
            <person name="Kaneko T."/>
            <person name="Katoh T."/>
            <person name="Sato S."/>
            <person name="Nakamura Y."/>
            <person name="Asamizu E."/>
            <person name="Tabata S."/>
        </authorList>
    </citation>
    <scope>NUCLEOTIDE SEQUENCE [LARGE SCALE GENOMIC DNA]</scope>
    <source>
        <strain>cv. Columbia</strain>
    </source>
</reference>
<reference key="2">
    <citation type="journal article" date="2000" name="Nature">
        <title>Sequence and analysis of chromosome 1 of the plant Arabidopsis thaliana.</title>
        <authorList>
            <person name="Theologis A."/>
            <person name="Ecker J.R."/>
            <person name="Palm C.J."/>
            <person name="Federspiel N.A."/>
            <person name="Kaul S."/>
            <person name="White O."/>
            <person name="Alonso J."/>
            <person name="Altafi H."/>
            <person name="Araujo R."/>
            <person name="Bowman C.L."/>
            <person name="Brooks S.Y."/>
            <person name="Buehler E."/>
            <person name="Chan A."/>
            <person name="Chao Q."/>
            <person name="Chen H."/>
            <person name="Cheuk R.F."/>
            <person name="Chin C.W."/>
            <person name="Chung M.K."/>
            <person name="Conn L."/>
            <person name="Conway A.B."/>
            <person name="Conway A.R."/>
            <person name="Creasy T.H."/>
            <person name="Dewar K."/>
            <person name="Dunn P."/>
            <person name="Etgu P."/>
            <person name="Feldblyum T.V."/>
            <person name="Feng J.-D."/>
            <person name="Fong B."/>
            <person name="Fujii C.Y."/>
            <person name="Gill J.E."/>
            <person name="Goldsmith A.D."/>
            <person name="Haas B."/>
            <person name="Hansen N.F."/>
            <person name="Hughes B."/>
            <person name="Huizar L."/>
            <person name="Hunter J.L."/>
            <person name="Jenkins J."/>
            <person name="Johnson-Hopson C."/>
            <person name="Khan S."/>
            <person name="Khaykin E."/>
            <person name="Kim C.J."/>
            <person name="Koo H.L."/>
            <person name="Kremenetskaia I."/>
            <person name="Kurtz D.B."/>
            <person name="Kwan A."/>
            <person name="Lam B."/>
            <person name="Langin-Hooper S."/>
            <person name="Lee A."/>
            <person name="Lee J.M."/>
            <person name="Lenz C.A."/>
            <person name="Li J.H."/>
            <person name="Li Y.-P."/>
            <person name="Lin X."/>
            <person name="Liu S.X."/>
            <person name="Liu Z.A."/>
            <person name="Luros J.S."/>
            <person name="Maiti R."/>
            <person name="Marziali A."/>
            <person name="Militscher J."/>
            <person name="Miranda M."/>
            <person name="Nguyen M."/>
            <person name="Nierman W.C."/>
            <person name="Osborne B.I."/>
            <person name="Pai G."/>
            <person name="Peterson J."/>
            <person name="Pham P.K."/>
            <person name="Rizzo M."/>
            <person name="Rooney T."/>
            <person name="Rowley D."/>
            <person name="Sakano H."/>
            <person name="Salzberg S.L."/>
            <person name="Schwartz J.R."/>
            <person name="Shinn P."/>
            <person name="Southwick A.M."/>
            <person name="Sun H."/>
            <person name="Tallon L.J."/>
            <person name="Tambunga G."/>
            <person name="Toriumi M.J."/>
            <person name="Town C.D."/>
            <person name="Utterback T."/>
            <person name="Van Aken S."/>
            <person name="Vaysberg M."/>
            <person name="Vysotskaia V.S."/>
            <person name="Walker M."/>
            <person name="Wu D."/>
            <person name="Yu G."/>
            <person name="Fraser C.M."/>
            <person name="Venter J.C."/>
            <person name="Davis R.W."/>
        </authorList>
    </citation>
    <scope>NUCLEOTIDE SEQUENCE [LARGE SCALE GENOMIC DNA]</scope>
    <source>
        <strain>cv. Columbia</strain>
    </source>
</reference>
<reference key="3">
    <citation type="journal article" date="2017" name="Plant J.">
        <title>Araport11: a complete reannotation of the Arabidopsis thaliana reference genome.</title>
        <authorList>
            <person name="Cheng C.Y."/>
            <person name="Krishnakumar V."/>
            <person name="Chan A.P."/>
            <person name="Thibaud-Nissen F."/>
            <person name="Schobel S."/>
            <person name="Town C.D."/>
        </authorList>
    </citation>
    <scope>GENOME REANNOTATION</scope>
    <source>
        <strain>cv. Columbia</strain>
    </source>
</reference>
<protein>
    <recommendedName>
        <fullName>Putative F-box protein At3g29830</fullName>
    </recommendedName>
</protein>
<name>FB191_ARATH</name>
<dbReference type="EMBL" id="AP000736">
    <property type="protein sequence ID" value="BAB02997.1"/>
    <property type="molecule type" value="Genomic_DNA"/>
</dbReference>
<dbReference type="EMBL" id="AC027033">
    <property type="protein sequence ID" value="AAG12672.1"/>
    <property type="status" value="ALT_SEQ"/>
    <property type="molecule type" value="Genomic_DNA"/>
</dbReference>
<dbReference type="EMBL" id="CP002686">
    <property type="protein sequence ID" value="AEE77617.1"/>
    <property type="status" value="ALT_SEQ"/>
    <property type="molecule type" value="Genomic_DNA"/>
</dbReference>
<dbReference type="EMBL" id="CP002686">
    <property type="protein sequence ID" value="ANM64304.1"/>
    <property type="molecule type" value="Genomic_DNA"/>
</dbReference>
<dbReference type="RefSeq" id="NP_001326343.1">
    <property type="nucleotide sequence ID" value="NM_001339040.1"/>
</dbReference>
<dbReference type="RefSeq" id="NP_189631.1">
    <property type="nucleotide sequence ID" value="NM_113911.1"/>
</dbReference>
<dbReference type="FunCoup" id="Q9LJ48">
    <property type="interactions" value="112"/>
</dbReference>
<dbReference type="iPTMnet" id="Q9LJ48"/>
<dbReference type="PaxDb" id="3702-AT3G29830.1"/>
<dbReference type="EnsemblPlants" id="AT3G29830.2">
    <property type="protein sequence ID" value="AT3G29830.2"/>
    <property type="gene ID" value="AT3G29830"/>
</dbReference>
<dbReference type="GeneID" id="822699"/>
<dbReference type="Gramene" id="AT3G29830.2">
    <property type="protein sequence ID" value="AT3G29830.2"/>
    <property type="gene ID" value="AT3G29830"/>
</dbReference>
<dbReference type="KEGG" id="ath:AT3G29830"/>
<dbReference type="Araport" id="AT3G29830"/>
<dbReference type="TAIR" id="AT3G29830"/>
<dbReference type="eggNOG" id="ENOG502QVFC">
    <property type="taxonomic scope" value="Eukaryota"/>
</dbReference>
<dbReference type="HOGENOM" id="CLU_045042_0_0_1"/>
<dbReference type="InParanoid" id="Q9LJ48"/>
<dbReference type="OMA" id="METFELC"/>
<dbReference type="PhylomeDB" id="Q9LJ48"/>
<dbReference type="PRO" id="PR:Q9LJ48"/>
<dbReference type="Proteomes" id="UP000006548">
    <property type="component" value="Chromosome 3"/>
</dbReference>
<dbReference type="ExpressionAtlas" id="Q9LJ48">
    <property type="expression patterns" value="baseline"/>
</dbReference>
<dbReference type="CDD" id="cd22160">
    <property type="entry name" value="F-box_AtFBL13-like"/>
    <property type="match status" value="1"/>
</dbReference>
<dbReference type="Gene3D" id="1.20.1280.50">
    <property type="match status" value="1"/>
</dbReference>
<dbReference type="Gene3D" id="3.80.10.10">
    <property type="entry name" value="Ribonuclease Inhibitor"/>
    <property type="match status" value="1"/>
</dbReference>
<dbReference type="InterPro" id="IPR036047">
    <property type="entry name" value="F-box-like_dom_sf"/>
</dbReference>
<dbReference type="InterPro" id="IPR053781">
    <property type="entry name" value="F-box_AtFBL13-like"/>
</dbReference>
<dbReference type="InterPro" id="IPR001810">
    <property type="entry name" value="F-box_dom"/>
</dbReference>
<dbReference type="InterPro" id="IPR050232">
    <property type="entry name" value="FBL13/AtMIF1-like"/>
</dbReference>
<dbReference type="InterPro" id="IPR032675">
    <property type="entry name" value="LRR_dom_sf"/>
</dbReference>
<dbReference type="PANTHER" id="PTHR31900:SF34">
    <property type="entry name" value="EMB|CAB62440.1-RELATED"/>
    <property type="match status" value="1"/>
</dbReference>
<dbReference type="PANTHER" id="PTHR31900">
    <property type="entry name" value="F-BOX/RNI SUPERFAMILY PROTEIN-RELATED"/>
    <property type="match status" value="1"/>
</dbReference>
<dbReference type="Pfam" id="PF00646">
    <property type="entry name" value="F-box"/>
    <property type="match status" value="1"/>
</dbReference>
<dbReference type="SUPFAM" id="SSF81383">
    <property type="entry name" value="F-box domain"/>
    <property type="match status" value="1"/>
</dbReference>
<dbReference type="SUPFAM" id="SSF52058">
    <property type="entry name" value="L domain-like"/>
    <property type="match status" value="1"/>
</dbReference>
<dbReference type="PROSITE" id="PS50181">
    <property type="entry name" value="FBOX"/>
    <property type="match status" value="1"/>
</dbReference>
<sequence>MDSVNQRDRISSLPDVVLVMILSFLSFKDNVKTSILSKRWRNICYEAKNISFKESEYVDISVFDYVSKRVSFVRYMLNWVSRVPIKVIESFEICLGFPVGFEVEIKSLIEFSISRQVKKLVLDFSSPFWDNTWDGLRNDDFVIELPALIYGLQTLESLTIYACMFDPSRFTNVGLRTLSIGWFRLEKIESLLSKFPLLESLSIISCYLDEVKLAGQIRVRELIIDNCIIPTMYCLLNLPNIEIFKYSGNVIVFDFQKVNMILLKEVYLDFFIEHENDEPTYSPKEAGDILSHLLNDLRSSRTLTVCSYLLEVISECNDPVDMLRDVQAQHLVLETLMHPNEFTGMRLLLDHCPNLETLTFQLLCLKPFPVRLQYIDSHTLWLENISSRCLRRTLKILVVRGFCNSWNEFYLLNYLVLPEHGFALERVELYLPPLQEMPRQWAYHGAAMLQKTSNRVQVILHSA</sequence>
<keyword id="KW-1185">Reference proteome</keyword>